<comment type="function">
    <text evidence="1">Protein S19 forms a complex with S13 that binds strongly to the 16S ribosomal RNA.</text>
</comment>
<comment type="similarity">
    <text evidence="1">Belongs to the universal ribosomal protein uS19 family.</text>
</comment>
<name>RS19_STRPZ</name>
<reference key="1">
    <citation type="journal article" date="2008" name="J. Bacteriol.">
        <title>Genome sequence of a nephritogenic and highly transformable M49 strain of Streptococcus pyogenes.</title>
        <authorList>
            <person name="McShan W.M."/>
            <person name="Ferretti J.J."/>
            <person name="Karasawa T."/>
            <person name="Suvorov A.N."/>
            <person name="Lin S."/>
            <person name="Qin B."/>
            <person name="Jia H."/>
            <person name="Kenton S."/>
            <person name="Najar F."/>
            <person name="Wu H."/>
            <person name="Scott J."/>
            <person name="Roe B.A."/>
            <person name="Savic D.J."/>
        </authorList>
    </citation>
    <scope>NUCLEOTIDE SEQUENCE [LARGE SCALE GENOMIC DNA]</scope>
    <source>
        <strain>NZ131</strain>
    </source>
</reference>
<feature type="chain" id="PRO_1000128045" description="Small ribosomal subunit protein uS19">
    <location>
        <begin position="1"/>
        <end position="92"/>
    </location>
</feature>
<evidence type="ECO:0000255" key="1">
    <source>
        <dbReference type="HAMAP-Rule" id="MF_00531"/>
    </source>
</evidence>
<evidence type="ECO:0000305" key="2"/>
<gene>
    <name evidence="1" type="primary">rpsS</name>
    <name type="ordered locus">Spy49_0050</name>
</gene>
<keyword id="KW-0687">Ribonucleoprotein</keyword>
<keyword id="KW-0689">Ribosomal protein</keyword>
<keyword id="KW-0694">RNA-binding</keyword>
<keyword id="KW-0699">rRNA-binding</keyword>
<dbReference type="EMBL" id="CP000829">
    <property type="protein sequence ID" value="ACI60408.1"/>
    <property type="molecule type" value="Genomic_DNA"/>
</dbReference>
<dbReference type="SMR" id="B5XJ40"/>
<dbReference type="KEGG" id="soz:Spy49_0050"/>
<dbReference type="HOGENOM" id="CLU_144911_0_1_9"/>
<dbReference type="Proteomes" id="UP000001039">
    <property type="component" value="Chromosome"/>
</dbReference>
<dbReference type="GO" id="GO:0005737">
    <property type="term" value="C:cytoplasm"/>
    <property type="evidence" value="ECO:0007669"/>
    <property type="project" value="UniProtKB-ARBA"/>
</dbReference>
<dbReference type="GO" id="GO:0015935">
    <property type="term" value="C:small ribosomal subunit"/>
    <property type="evidence" value="ECO:0007669"/>
    <property type="project" value="InterPro"/>
</dbReference>
<dbReference type="GO" id="GO:0019843">
    <property type="term" value="F:rRNA binding"/>
    <property type="evidence" value="ECO:0007669"/>
    <property type="project" value="UniProtKB-UniRule"/>
</dbReference>
<dbReference type="GO" id="GO:0003735">
    <property type="term" value="F:structural constituent of ribosome"/>
    <property type="evidence" value="ECO:0007669"/>
    <property type="project" value="InterPro"/>
</dbReference>
<dbReference type="GO" id="GO:0000028">
    <property type="term" value="P:ribosomal small subunit assembly"/>
    <property type="evidence" value="ECO:0007669"/>
    <property type="project" value="TreeGrafter"/>
</dbReference>
<dbReference type="GO" id="GO:0006412">
    <property type="term" value="P:translation"/>
    <property type="evidence" value="ECO:0007669"/>
    <property type="project" value="UniProtKB-UniRule"/>
</dbReference>
<dbReference type="FunFam" id="3.30.860.10:FF:000001">
    <property type="entry name" value="30S ribosomal protein S19"/>
    <property type="match status" value="1"/>
</dbReference>
<dbReference type="Gene3D" id="3.30.860.10">
    <property type="entry name" value="30s Ribosomal Protein S19, Chain A"/>
    <property type="match status" value="1"/>
</dbReference>
<dbReference type="HAMAP" id="MF_00531">
    <property type="entry name" value="Ribosomal_uS19"/>
    <property type="match status" value="1"/>
</dbReference>
<dbReference type="InterPro" id="IPR002222">
    <property type="entry name" value="Ribosomal_uS19"/>
</dbReference>
<dbReference type="InterPro" id="IPR005732">
    <property type="entry name" value="Ribosomal_uS19_bac-type"/>
</dbReference>
<dbReference type="InterPro" id="IPR020934">
    <property type="entry name" value="Ribosomal_uS19_CS"/>
</dbReference>
<dbReference type="InterPro" id="IPR023575">
    <property type="entry name" value="Ribosomal_uS19_SF"/>
</dbReference>
<dbReference type="NCBIfam" id="TIGR01050">
    <property type="entry name" value="rpsS_bact"/>
    <property type="match status" value="1"/>
</dbReference>
<dbReference type="PANTHER" id="PTHR11880">
    <property type="entry name" value="RIBOSOMAL PROTEIN S19P FAMILY MEMBER"/>
    <property type="match status" value="1"/>
</dbReference>
<dbReference type="PANTHER" id="PTHR11880:SF8">
    <property type="entry name" value="SMALL RIBOSOMAL SUBUNIT PROTEIN US19M"/>
    <property type="match status" value="1"/>
</dbReference>
<dbReference type="Pfam" id="PF00203">
    <property type="entry name" value="Ribosomal_S19"/>
    <property type="match status" value="1"/>
</dbReference>
<dbReference type="PIRSF" id="PIRSF002144">
    <property type="entry name" value="Ribosomal_S19"/>
    <property type="match status" value="1"/>
</dbReference>
<dbReference type="PRINTS" id="PR00975">
    <property type="entry name" value="RIBOSOMALS19"/>
</dbReference>
<dbReference type="SUPFAM" id="SSF54570">
    <property type="entry name" value="Ribosomal protein S19"/>
    <property type="match status" value="1"/>
</dbReference>
<dbReference type="PROSITE" id="PS00323">
    <property type="entry name" value="RIBOSOMAL_S19"/>
    <property type="match status" value="1"/>
</dbReference>
<sequence>MGRSLKKAPFVDEHLMKKVEAQAHDEKKKVIKTWSRRSTIFPSFIGYTIAVYDGRKHVPVYIQEDMVGHKLGEFAPTRTYKGHAADDKKTRR</sequence>
<proteinExistence type="inferred from homology"/>
<protein>
    <recommendedName>
        <fullName evidence="1">Small ribosomal subunit protein uS19</fullName>
    </recommendedName>
    <alternativeName>
        <fullName evidence="2">30S ribosomal protein S19</fullName>
    </alternativeName>
</protein>
<organism>
    <name type="scientific">Streptococcus pyogenes serotype M49 (strain NZ131)</name>
    <dbReference type="NCBI Taxonomy" id="471876"/>
    <lineage>
        <taxon>Bacteria</taxon>
        <taxon>Bacillati</taxon>
        <taxon>Bacillota</taxon>
        <taxon>Bacilli</taxon>
        <taxon>Lactobacillales</taxon>
        <taxon>Streptococcaceae</taxon>
        <taxon>Streptococcus</taxon>
    </lineage>
</organism>
<accession>B5XJ40</accession>